<evidence type="ECO:0000305" key="1"/>
<evidence type="ECO:0007829" key="2">
    <source>
        <dbReference type="PDB" id="7YML"/>
    </source>
</evidence>
<evidence type="ECO:0007829" key="3">
    <source>
        <dbReference type="PDB" id="8B64"/>
    </source>
</evidence>
<reference key="1">
    <citation type="journal article" date="1984" name="Cell">
        <title>Nucleotide and deduced polypeptide sequences of the photosynthetic reaction-center, B870 antenna, and flanking polypeptides from R. capsulata.</title>
        <authorList>
            <person name="Youvan D.C."/>
            <person name="Bylina E.J."/>
            <person name="Alberti M."/>
            <person name="Begusch H."/>
            <person name="Hearst J.E."/>
        </authorList>
    </citation>
    <scope>NUCLEOTIDE SEQUENCE [GENOMIC DNA]</scope>
</reference>
<organism>
    <name type="scientific">Rhodobacter capsulatus</name>
    <name type="common">Rhodopseudomonas capsulata</name>
    <dbReference type="NCBI Taxonomy" id="1061"/>
    <lineage>
        <taxon>Bacteria</taxon>
        <taxon>Pseudomonadati</taxon>
        <taxon>Pseudomonadota</taxon>
        <taxon>Alphaproteobacteria</taxon>
        <taxon>Rhodobacterales</taxon>
        <taxon>Rhodobacter group</taxon>
        <taxon>Rhodobacter</taxon>
    </lineage>
</organism>
<gene>
    <name type="primary">puhA</name>
</gene>
<feature type="chain" id="PRO_0000090393" description="Reaction center protein H chain">
    <location>
        <begin position="1"/>
        <end position="254"/>
    </location>
</feature>
<feature type="transmembrane region" description="Helical">
    <location>
        <begin position="12"/>
        <end position="31"/>
    </location>
</feature>
<feature type="strand" evidence="3">
    <location>
        <begin position="5"/>
        <end position="7"/>
    </location>
</feature>
<feature type="helix" evidence="3">
    <location>
        <begin position="12"/>
        <end position="34"/>
    </location>
</feature>
<feature type="strand" evidence="3">
    <location>
        <begin position="37"/>
        <end position="39"/>
    </location>
</feature>
<feature type="strand" evidence="3">
    <location>
        <begin position="47"/>
        <end position="49"/>
    </location>
</feature>
<feature type="strand" evidence="3">
    <location>
        <begin position="63"/>
        <end position="65"/>
    </location>
</feature>
<feature type="strand" evidence="3">
    <location>
        <begin position="71"/>
        <end position="76"/>
    </location>
</feature>
<feature type="helix" evidence="3">
    <location>
        <begin position="77"/>
        <end position="82"/>
    </location>
</feature>
<feature type="strand" evidence="3">
    <location>
        <begin position="90"/>
        <end position="93"/>
    </location>
</feature>
<feature type="strand" evidence="2">
    <location>
        <begin position="95"/>
        <end position="98"/>
    </location>
</feature>
<feature type="strand" evidence="3">
    <location>
        <begin position="101"/>
        <end position="105"/>
    </location>
</feature>
<feature type="helix" evidence="3">
    <location>
        <begin position="107"/>
        <end position="110"/>
    </location>
</feature>
<feature type="helix" evidence="3">
    <location>
        <begin position="113"/>
        <end position="115"/>
    </location>
</feature>
<feature type="strand" evidence="3">
    <location>
        <begin position="130"/>
        <end position="136"/>
    </location>
</feature>
<feature type="helix" evidence="3">
    <location>
        <begin position="137"/>
        <end position="139"/>
    </location>
</feature>
<feature type="strand" evidence="3">
    <location>
        <begin position="143"/>
        <end position="147"/>
    </location>
</feature>
<feature type="strand" evidence="3">
    <location>
        <begin position="154"/>
        <end position="156"/>
    </location>
</feature>
<feature type="strand" evidence="3">
    <location>
        <begin position="162"/>
        <end position="172"/>
    </location>
</feature>
<feature type="turn" evidence="3">
    <location>
        <begin position="173"/>
        <end position="176"/>
    </location>
</feature>
<feature type="strand" evidence="3">
    <location>
        <begin position="177"/>
        <end position="185"/>
    </location>
</feature>
<feature type="strand" evidence="3">
    <location>
        <begin position="190"/>
        <end position="194"/>
    </location>
</feature>
<feature type="helix" evidence="3">
    <location>
        <begin position="195"/>
        <end position="197"/>
    </location>
</feature>
<feature type="helix" evidence="3">
    <location>
        <begin position="212"/>
        <end position="215"/>
    </location>
</feature>
<feature type="helix" evidence="3">
    <location>
        <begin position="229"/>
        <end position="240"/>
    </location>
</feature>
<feature type="turn" evidence="3">
    <location>
        <begin position="241"/>
        <end position="244"/>
    </location>
</feature>
<proteinExistence type="evidence at protein level"/>
<protein>
    <recommendedName>
        <fullName>Reaction center protein H chain</fullName>
    </recommendedName>
    <alternativeName>
        <fullName>Photosynthetic reaction center H subunit</fullName>
    </alternativeName>
</protein>
<sequence length="254" mass="28537">MVGVNFFGDFDLASLAIWSFWAFLAYLIYYLQTENMREGYPLENDDGKLSPNQGPFPVPSPKTFDLADGRKIVVPSVENEEAHRRTDLALERTSVNEGYPFRPTGNPMLDGVGPASWVPRRDEPEVDAHGHNKIQPMRKTEMKVSAGRDPRGMPVQAGDTEVVGKIVDMWVDIPEQLVRYLEVELNSGKKKLLPMTMLKIWSDRVRVNAITSDLFDTIPDIKSPDVVTKLEEDKISAYVAGGYMYAKGVKPYAL</sequence>
<accession>P19056</accession>
<keyword id="KW-0002">3D-structure</keyword>
<keyword id="KW-0076">Bacteriochlorophyll</keyword>
<keyword id="KW-0148">Chlorophyll</keyword>
<keyword id="KW-0157">Chromophore</keyword>
<keyword id="KW-0249">Electron transport</keyword>
<keyword id="KW-0472">Membrane</keyword>
<keyword id="KW-0602">Photosynthesis</keyword>
<keyword id="KW-0674">Reaction center</keyword>
<keyword id="KW-0812">Transmembrane</keyword>
<keyword id="KW-1133">Transmembrane helix</keyword>
<keyword id="KW-0813">Transport</keyword>
<comment type="function">
    <text>The reaction center is a membrane-bound complex that mediates the initial photochemical event in the electron transfer process of photosynthesis.</text>
</comment>
<comment type="cofactor">
    <cofactor>
        <name>a bacteriochlorophyll</name>
        <dbReference type="ChEBI" id="CHEBI:38201"/>
    </cofactor>
    <text>Binds 4 bacteriochlorophylls per trimer.</text>
</comment>
<comment type="cofactor">
    <cofactor>
        <name>a bacteriopheophytin</name>
        <dbReference type="ChEBI" id="CHEBI:60411"/>
    </cofactor>
    <text>Binds 2 bacteriopheophytins per trimer.</text>
</comment>
<comment type="cofactor">
    <cofactor>
        <name>Fe cation</name>
        <dbReference type="ChEBI" id="CHEBI:24875"/>
    </cofactor>
    <text>Binds 1 Fe cation per trimer.</text>
</comment>
<comment type="cofactor">
    <cofactor>
        <name>Mg(2+)</name>
        <dbReference type="ChEBI" id="CHEBI:18420"/>
    </cofactor>
    <text>Binds 4 Mg(2+) ions per trimer.</text>
</comment>
<comment type="cofactor">
    <cofactor>
        <name>a ubiquinone</name>
        <dbReference type="ChEBI" id="CHEBI:16389"/>
    </cofactor>
    <text>Binds 2 ubiquinone per trimer.</text>
</comment>
<comment type="subunit">
    <text>Heterotrimer composed of subunits L, M, and H.</text>
</comment>
<comment type="subcellular location">
    <subcellularLocation>
        <location>Cellular chromatophore membrane</location>
        <topology>Single-pass membrane protein</topology>
    </subcellularLocation>
</comment>
<comment type="similarity">
    <text evidence="1">Belongs to the reaction center PuhA family.</text>
</comment>
<dbReference type="EMBL" id="AH000921">
    <property type="protein sequence ID" value="AAA26171.1"/>
    <property type="molecule type" value="Genomic_DNA"/>
</dbReference>
<dbReference type="EMBL" id="Z11165">
    <property type="protein sequence ID" value="CAA77520.1"/>
    <property type="molecule type" value="Genomic_DNA"/>
</dbReference>
<dbReference type="PIR" id="C28771">
    <property type="entry name" value="C28771"/>
</dbReference>
<dbReference type="RefSeq" id="WP_013066403.1">
    <property type="nucleotide sequence ID" value="NZ_VIBE01000010.1"/>
</dbReference>
<dbReference type="PDB" id="7YML">
    <property type="method" value="EM"/>
    <property type="resolution" value="2.60 A"/>
    <property type="chains" value="H=1-253"/>
</dbReference>
<dbReference type="PDB" id="8B64">
    <property type="method" value="EM"/>
    <property type="resolution" value="2.59 A"/>
    <property type="chains" value="H=1-254"/>
</dbReference>
<dbReference type="PDBsum" id="7YML"/>
<dbReference type="PDBsum" id="8B64"/>
<dbReference type="EMDB" id="EMD-15862"/>
<dbReference type="EMDB" id="EMD-33931"/>
<dbReference type="SMR" id="P19056"/>
<dbReference type="GeneID" id="31489605"/>
<dbReference type="OMA" id="YAFWIFF"/>
<dbReference type="GO" id="GO:0030077">
    <property type="term" value="C:plasma membrane light-harvesting complex"/>
    <property type="evidence" value="ECO:0007669"/>
    <property type="project" value="InterPro"/>
</dbReference>
<dbReference type="GO" id="GO:0042717">
    <property type="term" value="C:plasma membrane-derived chromatophore membrane"/>
    <property type="evidence" value="ECO:0007669"/>
    <property type="project" value="UniProtKB-SubCell"/>
</dbReference>
<dbReference type="GO" id="GO:0042314">
    <property type="term" value="F:bacteriochlorophyll binding"/>
    <property type="evidence" value="ECO:0007669"/>
    <property type="project" value="UniProtKB-KW"/>
</dbReference>
<dbReference type="GO" id="GO:0045156">
    <property type="term" value="F:electron transporter, transferring electrons within the cyclic electron transport pathway of photosynthesis activity"/>
    <property type="evidence" value="ECO:0007669"/>
    <property type="project" value="InterPro"/>
</dbReference>
<dbReference type="GO" id="GO:0019684">
    <property type="term" value="P:photosynthesis, light reaction"/>
    <property type="evidence" value="ECO:0007669"/>
    <property type="project" value="InterPro"/>
</dbReference>
<dbReference type="CDD" id="cd00226">
    <property type="entry name" value="PRCH"/>
    <property type="match status" value="1"/>
</dbReference>
<dbReference type="Gene3D" id="3.90.50.10">
    <property type="entry name" value="Photosynthetic Reaction Center, subunit H, domain 2"/>
    <property type="match status" value="1"/>
</dbReference>
<dbReference type="Gene3D" id="4.10.540.10">
    <property type="entry name" value="Photosynthetic reaction centre, H subunit, N-terminal domain"/>
    <property type="match status" value="1"/>
</dbReference>
<dbReference type="InterPro" id="IPR014747">
    <property type="entry name" value="Bac_photo_RC_H_C"/>
</dbReference>
<dbReference type="InterPro" id="IPR005652">
    <property type="entry name" value="Photo_RC_H"/>
</dbReference>
<dbReference type="InterPro" id="IPR015810">
    <property type="entry name" value="Photo_RC_H_N"/>
</dbReference>
<dbReference type="InterPro" id="IPR037097">
    <property type="entry name" value="Photo_RC_H_N_sf"/>
</dbReference>
<dbReference type="InterPro" id="IPR027275">
    <property type="entry name" value="PRC-brl_dom"/>
</dbReference>
<dbReference type="InterPro" id="IPR011033">
    <property type="entry name" value="PRC_barrel-like_sf"/>
</dbReference>
<dbReference type="NCBIfam" id="TIGR01150">
    <property type="entry name" value="puhA"/>
    <property type="match status" value="1"/>
</dbReference>
<dbReference type="Pfam" id="PF05239">
    <property type="entry name" value="PRC"/>
    <property type="match status" value="1"/>
</dbReference>
<dbReference type="Pfam" id="PF03967">
    <property type="entry name" value="PRCH"/>
    <property type="match status" value="1"/>
</dbReference>
<dbReference type="SUPFAM" id="SSF81490">
    <property type="entry name" value="Photosystem II reaction centre subunit H, transmembrane region"/>
    <property type="match status" value="1"/>
</dbReference>
<dbReference type="SUPFAM" id="SSF50346">
    <property type="entry name" value="PRC-barrel domain"/>
    <property type="match status" value="1"/>
</dbReference>
<name>RCEH_RHOCA</name>